<name>ERA_CORDI</name>
<protein>
    <recommendedName>
        <fullName evidence="1">GTPase Era</fullName>
    </recommendedName>
</protein>
<comment type="function">
    <text evidence="1">An essential GTPase that binds both GDP and GTP, with rapid nucleotide exchange. Plays a role in 16S rRNA processing and 30S ribosomal subunit biogenesis and possibly also in cell cycle regulation and energy metabolism.</text>
</comment>
<comment type="subunit">
    <text evidence="1">Monomer.</text>
</comment>
<comment type="subcellular location">
    <subcellularLocation>
        <location>Cytoplasm</location>
    </subcellularLocation>
    <subcellularLocation>
        <location evidence="1">Cell membrane</location>
        <topology evidence="1">Peripheral membrane protein</topology>
    </subcellularLocation>
</comment>
<comment type="similarity">
    <text evidence="1 2">Belongs to the TRAFAC class TrmE-Era-EngA-EngB-Septin-like GTPase superfamily. Era GTPase family.</text>
</comment>
<accession>Q6NG20</accession>
<evidence type="ECO:0000255" key="1">
    <source>
        <dbReference type="HAMAP-Rule" id="MF_00367"/>
    </source>
</evidence>
<evidence type="ECO:0000255" key="2">
    <source>
        <dbReference type="PROSITE-ProRule" id="PRU01050"/>
    </source>
</evidence>
<reference key="1">
    <citation type="journal article" date="2003" name="Nucleic Acids Res.">
        <title>The complete genome sequence and analysis of Corynebacterium diphtheriae NCTC13129.</title>
        <authorList>
            <person name="Cerdeno-Tarraga A.-M."/>
            <person name="Efstratiou A."/>
            <person name="Dover L.G."/>
            <person name="Holden M.T.G."/>
            <person name="Pallen M.J."/>
            <person name="Bentley S.D."/>
            <person name="Besra G.S."/>
            <person name="Churcher C.M."/>
            <person name="James K.D."/>
            <person name="De Zoysa A."/>
            <person name="Chillingworth T."/>
            <person name="Cronin A."/>
            <person name="Dowd L."/>
            <person name="Feltwell T."/>
            <person name="Hamlin N."/>
            <person name="Holroyd S."/>
            <person name="Jagels K."/>
            <person name="Moule S."/>
            <person name="Quail M.A."/>
            <person name="Rabbinowitsch E."/>
            <person name="Rutherford K.M."/>
            <person name="Thomson N.R."/>
            <person name="Unwin L."/>
            <person name="Whitehead S."/>
            <person name="Barrell B.G."/>
            <person name="Parkhill J."/>
        </authorList>
    </citation>
    <scope>NUCLEOTIDE SEQUENCE [LARGE SCALE GENOMIC DNA]</scope>
    <source>
        <strain>ATCC 700971 / NCTC 13129 / Biotype gravis</strain>
    </source>
</reference>
<proteinExistence type="inferred from homology"/>
<dbReference type="EMBL" id="BX248359">
    <property type="protein sequence ID" value="CAE50243.1"/>
    <property type="molecule type" value="Genomic_DNA"/>
</dbReference>
<dbReference type="RefSeq" id="WP_003852330.1">
    <property type="nucleotide sequence ID" value="NC_002935.2"/>
</dbReference>
<dbReference type="SMR" id="Q6NG20"/>
<dbReference type="STRING" id="257309.DIP1714"/>
<dbReference type="GeneID" id="29421643"/>
<dbReference type="KEGG" id="cdi:DIP1714"/>
<dbReference type="HOGENOM" id="CLU_038009_0_2_11"/>
<dbReference type="Proteomes" id="UP000002198">
    <property type="component" value="Chromosome"/>
</dbReference>
<dbReference type="GO" id="GO:0005829">
    <property type="term" value="C:cytosol"/>
    <property type="evidence" value="ECO:0007669"/>
    <property type="project" value="TreeGrafter"/>
</dbReference>
<dbReference type="GO" id="GO:0005886">
    <property type="term" value="C:plasma membrane"/>
    <property type="evidence" value="ECO:0007669"/>
    <property type="project" value="UniProtKB-SubCell"/>
</dbReference>
<dbReference type="GO" id="GO:0005525">
    <property type="term" value="F:GTP binding"/>
    <property type="evidence" value="ECO:0007669"/>
    <property type="project" value="UniProtKB-UniRule"/>
</dbReference>
<dbReference type="GO" id="GO:0003924">
    <property type="term" value="F:GTPase activity"/>
    <property type="evidence" value="ECO:0007669"/>
    <property type="project" value="UniProtKB-UniRule"/>
</dbReference>
<dbReference type="GO" id="GO:0043024">
    <property type="term" value="F:ribosomal small subunit binding"/>
    <property type="evidence" value="ECO:0007669"/>
    <property type="project" value="TreeGrafter"/>
</dbReference>
<dbReference type="GO" id="GO:0070181">
    <property type="term" value="F:small ribosomal subunit rRNA binding"/>
    <property type="evidence" value="ECO:0007669"/>
    <property type="project" value="UniProtKB-UniRule"/>
</dbReference>
<dbReference type="GO" id="GO:0000028">
    <property type="term" value="P:ribosomal small subunit assembly"/>
    <property type="evidence" value="ECO:0007669"/>
    <property type="project" value="TreeGrafter"/>
</dbReference>
<dbReference type="CDD" id="cd04163">
    <property type="entry name" value="Era"/>
    <property type="match status" value="1"/>
</dbReference>
<dbReference type="CDD" id="cd22534">
    <property type="entry name" value="KH-II_Era"/>
    <property type="match status" value="1"/>
</dbReference>
<dbReference type="Gene3D" id="3.30.300.20">
    <property type="match status" value="1"/>
</dbReference>
<dbReference type="Gene3D" id="3.40.50.300">
    <property type="entry name" value="P-loop containing nucleotide triphosphate hydrolases"/>
    <property type="match status" value="1"/>
</dbReference>
<dbReference type="HAMAP" id="MF_00367">
    <property type="entry name" value="GTPase_Era"/>
    <property type="match status" value="1"/>
</dbReference>
<dbReference type="InterPro" id="IPR030388">
    <property type="entry name" value="G_ERA_dom"/>
</dbReference>
<dbReference type="InterPro" id="IPR006073">
    <property type="entry name" value="GTP-bd"/>
</dbReference>
<dbReference type="InterPro" id="IPR005662">
    <property type="entry name" value="GTPase_Era-like"/>
</dbReference>
<dbReference type="InterPro" id="IPR015946">
    <property type="entry name" value="KH_dom-like_a/b"/>
</dbReference>
<dbReference type="InterPro" id="IPR004044">
    <property type="entry name" value="KH_dom_type_2"/>
</dbReference>
<dbReference type="InterPro" id="IPR009019">
    <property type="entry name" value="KH_sf_prok-type"/>
</dbReference>
<dbReference type="InterPro" id="IPR027417">
    <property type="entry name" value="P-loop_NTPase"/>
</dbReference>
<dbReference type="InterPro" id="IPR005225">
    <property type="entry name" value="Small_GTP-bd"/>
</dbReference>
<dbReference type="NCBIfam" id="TIGR00436">
    <property type="entry name" value="era"/>
    <property type="match status" value="1"/>
</dbReference>
<dbReference type="NCBIfam" id="NF000908">
    <property type="entry name" value="PRK00089.1"/>
    <property type="match status" value="1"/>
</dbReference>
<dbReference type="NCBIfam" id="TIGR00231">
    <property type="entry name" value="small_GTP"/>
    <property type="match status" value="1"/>
</dbReference>
<dbReference type="PANTHER" id="PTHR42698">
    <property type="entry name" value="GTPASE ERA"/>
    <property type="match status" value="1"/>
</dbReference>
<dbReference type="PANTHER" id="PTHR42698:SF1">
    <property type="entry name" value="GTPASE ERA, MITOCHONDRIAL"/>
    <property type="match status" value="1"/>
</dbReference>
<dbReference type="Pfam" id="PF07650">
    <property type="entry name" value="KH_2"/>
    <property type="match status" value="1"/>
</dbReference>
<dbReference type="Pfam" id="PF01926">
    <property type="entry name" value="MMR_HSR1"/>
    <property type="match status" value="1"/>
</dbReference>
<dbReference type="PRINTS" id="PR00326">
    <property type="entry name" value="GTP1OBG"/>
</dbReference>
<dbReference type="SUPFAM" id="SSF52540">
    <property type="entry name" value="P-loop containing nucleoside triphosphate hydrolases"/>
    <property type="match status" value="1"/>
</dbReference>
<dbReference type="SUPFAM" id="SSF54814">
    <property type="entry name" value="Prokaryotic type KH domain (KH-domain type II)"/>
    <property type="match status" value="1"/>
</dbReference>
<dbReference type="PROSITE" id="PS51713">
    <property type="entry name" value="G_ERA"/>
    <property type="match status" value="1"/>
</dbReference>
<dbReference type="PROSITE" id="PS50823">
    <property type="entry name" value="KH_TYPE_2"/>
    <property type="match status" value="1"/>
</dbReference>
<feature type="chain" id="PRO_1000079679" description="GTPase Era">
    <location>
        <begin position="1"/>
        <end position="305"/>
    </location>
</feature>
<feature type="domain" description="Era-type G" evidence="2">
    <location>
        <begin position="11"/>
        <end position="181"/>
    </location>
</feature>
<feature type="domain" description="KH type-2" evidence="1">
    <location>
        <begin position="212"/>
        <end position="291"/>
    </location>
</feature>
<feature type="region of interest" description="G1" evidence="2">
    <location>
        <begin position="19"/>
        <end position="26"/>
    </location>
</feature>
<feature type="region of interest" description="G2" evidence="2">
    <location>
        <begin position="45"/>
        <end position="49"/>
    </location>
</feature>
<feature type="region of interest" description="G3" evidence="2">
    <location>
        <begin position="66"/>
        <end position="69"/>
    </location>
</feature>
<feature type="region of interest" description="G4" evidence="2">
    <location>
        <begin position="130"/>
        <end position="133"/>
    </location>
</feature>
<feature type="region of interest" description="G5" evidence="2">
    <location>
        <begin position="160"/>
        <end position="162"/>
    </location>
</feature>
<feature type="binding site" evidence="1">
    <location>
        <begin position="19"/>
        <end position="26"/>
    </location>
    <ligand>
        <name>GTP</name>
        <dbReference type="ChEBI" id="CHEBI:37565"/>
    </ligand>
</feature>
<feature type="binding site" evidence="1">
    <location>
        <begin position="66"/>
        <end position="70"/>
    </location>
    <ligand>
        <name>GTP</name>
        <dbReference type="ChEBI" id="CHEBI:37565"/>
    </ligand>
</feature>
<feature type="binding site" evidence="1">
    <location>
        <begin position="130"/>
        <end position="133"/>
    </location>
    <ligand>
        <name>GTP</name>
        <dbReference type="ChEBI" id="CHEBI:37565"/>
    </ligand>
</feature>
<keyword id="KW-1003">Cell membrane</keyword>
<keyword id="KW-0963">Cytoplasm</keyword>
<keyword id="KW-0342">GTP-binding</keyword>
<keyword id="KW-0472">Membrane</keyword>
<keyword id="KW-0547">Nucleotide-binding</keyword>
<keyword id="KW-1185">Reference proteome</keyword>
<keyword id="KW-0690">Ribosome biogenesis</keyword>
<keyword id="KW-0694">RNA-binding</keyword>
<keyword id="KW-0699">rRNA-binding</keyword>
<organism>
    <name type="scientific">Corynebacterium diphtheriae (strain ATCC 700971 / NCTC 13129 / Biotype gravis)</name>
    <dbReference type="NCBI Taxonomy" id="257309"/>
    <lineage>
        <taxon>Bacteria</taxon>
        <taxon>Bacillati</taxon>
        <taxon>Actinomycetota</taxon>
        <taxon>Actinomycetes</taxon>
        <taxon>Mycobacteriales</taxon>
        <taxon>Corynebacteriaceae</taxon>
        <taxon>Corynebacterium</taxon>
    </lineage>
</organism>
<sequence>MSFTDTPEGFRSGFISFVGRPNTGKSTLTNALVGEKIAITANQPETTRHPIRGIVHREDAQIIVVDTPGLHKPRTLLGERLNEVVKDTYADMDLIAITVPADEKIGPGDRWILDAVKKVAPKTPLLGIVTKVDKASRDQVAVQLMELHELLGGNSEVVPVSAVTGEQRDVLLDVITRLLPEGPKFYPDDHITDDDTETRLSELIREAALSGLKDELPHSVAVQIDEILPNDEREGVLDVHAVIYVERPGQKSILIGKDGRRLGRIIHNARPEIIKILGSNVYLDLRIKVLKNWQQDPKQLGRLGF</sequence>
<gene>
    <name evidence="1" type="primary">era</name>
    <name type="ordered locus">DIP1714</name>
</gene>